<proteinExistence type="inferred from homology"/>
<dbReference type="EC" id="6.3.2.17" evidence="2"/>
<dbReference type="EMBL" id="ABSV01002212">
    <property type="protein sequence ID" value="EDZ69170.1"/>
    <property type="status" value="ALT_SEQ"/>
    <property type="molecule type" value="Genomic_DNA"/>
</dbReference>
<dbReference type="SMR" id="B5VSC3"/>
<dbReference type="OrthoDB" id="19167at4893"/>
<dbReference type="UniPathway" id="UPA00850"/>
<dbReference type="Proteomes" id="UP000008988">
    <property type="component" value="Unassembled WGS sequence"/>
</dbReference>
<dbReference type="GO" id="GO:0005829">
    <property type="term" value="C:cytosol"/>
    <property type="evidence" value="ECO:0007669"/>
    <property type="project" value="TreeGrafter"/>
</dbReference>
<dbReference type="GO" id="GO:0005743">
    <property type="term" value="C:mitochondrial inner membrane"/>
    <property type="evidence" value="ECO:0007669"/>
    <property type="project" value="UniProtKB-SubCell"/>
</dbReference>
<dbReference type="GO" id="GO:0005759">
    <property type="term" value="C:mitochondrial matrix"/>
    <property type="evidence" value="ECO:0007669"/>
    <property type="project" value="UniProtKB-SubCell"/>
</dbReference>
<dbReference type="GO" id="GO:0005524">
    <property type="term" value="F:ATP binding"/>
    <property type="evidence" value="ECO:0007669"/>
    <property type="project" value="UniProtKB-KW"/>
</dbReference>
<dbReference type="GO" id="GO:0046872">
    <property type="term" value="F:metal ion binding"/>
    <property type="evidence" value="ECO:0007669"/>
    <property type="project" value="UniProtKB-KW"/>
</dbReference>
<dbReference type="GO" id="GO:0004326">
    <property type="term" value="F:tetrahydrofolylpolyglutamate synthase activity"/>
    <property type="evidence" value="ECO:0007669"/>
    <property type="project" value="UniProtKB-EC"/>
</dbReference>
<dbReference type="GO" id="GO:0006730">
    <property type="term" value="P:one-carbon metabolic process"/>
    <property type="evidence" value="ECO:0007669"/>
    <property type="project" value="UniProtKB-KW"/>
</dbReference>
<dbReference type="FunFam" id="3.40.1190.10:FF:000009">
    <property type="entry name" value="Folylpolyglutamate synthase"/>
    <property type="match status" value="1"/>
</dbReference>
<dbReference type="FunFam" id="3.90.190.20:FF:000009">
    <property type="entry name" value="Folylpolyglutamate synthase"/>
    <property type="match status" value="1"/>
</dbReference>
<dbReference type="Gene3D" id="3.90.190.20">
    <property type="entry name" value="Mur ligase, C-terminal domain"/>
    <property type="match status" value="1"/>
</dbReference>
<dbReference type="Gene3D" id="3.40.1190.10">
    <property type="entry name" value="Mur-like, catalytic domain"/>
    <property type="match status" value="1"/>
</dbReference>
<dbReference type="InterPro" id="IPR001645">
    <property type="entry name" value="Folylpolyglutamate_synth"/>
</dbReference>
<dbReference type="InterPro" id="IPR018109">
    <property type="entry name" value="Folylpolyglutamate_synth_CS"/>
</dbReference>
<dbReference type="InterPro" id="IPR023600">
    <property type="entry name" value="Folylpolyglutamate_synth_euk"/>
</dbReference>
<dbReference type="InterPro" id="IPR036565">
    <property type="entry name" value="Mur-like_cat_sf"/>
</dbReference>
<dbReference type="InterPro" id="IPR036615">
    <property type="entry name" value="Mur_ligase_C_dom_sf"/>
</dbReference>
<dbReference type="NCBIfam" id="TIGR01499">
    <property type="entry name" value="folC"/>
    <property type="match status" value="1"/>
</dbReference>
<dbReference type="PANTHER" id="PTHR11136:SF5">
    <property type="entry name" value="FOLYLPOLYGLUTAMATE SYNTHASE, MITOCHONDRIAL"/>
    <property type="match status" value="1"/>
</dbReference>
<dbReference type="PANTHER" id="PTHR11136">
    <property type="entry name" value="FOLYLPOLYGLUTAMATE SYNTHASE-RELATED"/>
    <property type="match status" value="1"/>
</dbReference>
<dbReference type="PIRSF" id="PIRSF038895">
    <property type="entry name" value="FPGS"/>
    <property type="match status" value="1"/>
</dbReference>
<dbReference type="SUPFAM" id="SSF53623">
    <property type="entry name" value="MurD-like peptide ligases, catalytic domain"/>
    <property type="match status" value="1"/>
</dbReference>
<dbReference type="SUPFAM" id="SSF53244">
    <property type="entry name" value="MurD-like peptide ligases, peptide-binding domain"/>
    <property type="match status" value="1"/>
</dbReference>
<dbReference type="PROSITE" id="PS01011">
    <property type="entry name" value="FOLYLPOLYGLU_SYNT_1"/>
    <property type="match status" value="1"/>
</dbReference>
<dbReference type="PROSITE" id="PS01012">
    <property type="entry name" value="FOLYLPOLYGLU_SYNT_2"/>
    <property type="match status" value="1"/>
</dbReference>
<keyword id="KW-0067">ATP-binding</keyword>
<keyword id="KW-0963">Cytoplasm</keyword>
<keyword id="KW-0436">Ligase</keyword>
<keyword id="KW-0460">Magnesium</keyword>
<keyword id="KW-0472">Membrane</keyword>
<keyword id="KW-0479">Metal-binding</keyword>
<keyword id="KW-0496">Mitochondrion</keyword>
<keyword id="KW-0999">Mitochondrion inner membrane</keyword>
<keyword id="KW-0547">Nucleotide-binding</keyword>
<keyword id="KW-0554">One-carbon metabolism</keyword>
<protein>
    <recommendedName>
        <fullName evidence="2">Folylpolyglutamate synthase</fullName>
        <ecNumber evidence="2">6.3.2.17</ecNumber>
    </recommendedName>
    <alternativeName>
        <fullName evidence="2">Folylpoly-gamma-glutamate synthetase</fullName>
        <shortName evidence="2">FPGS</shortName>
    </alternativeName>
    <alternativeName>
        <fullName evidence="2">Tetrahydrofolylpolyglutamate synthase</fullName>
        <shortName evidence="2">Tetrahydrofolate synthase</shortName>
    </alternativeName>
</protein>
<sequence>MHKGKKNYPNLITSFRMNLKKIILNHDRFSHPERWKTNALLRFTFVYIKFLFDLMIIKNPLRMVGKTNRDAVTALNSLQSNYANIMAIRQTGDRKNTMTLLEMHEWSRRIGYSASDFNKLNIVHITGTKGKGSTAAFTSSILGQYKEQLPRIGLYTSPHLKSVRERIRINGEPISEEKFAKYFFEVWDRLDSTTSSLDKFPHMIPGSKPGYFKFLTLLSFHTFIQEDCKSCVYEVGVGGELDSTNIIEKPIVCGVTLLGIDHTFMLGDTIEEIAWNKGGIFKSGAPAFTVEKQPPQGLTILKERAEERKTTLTEVPPFKQLENVKLGIAGEFQKSNASLAVMLASEILHTSNILEEKIKCSSNASIPEKFIIGLQNTKWEGRCQVLEKGKNVWYIDGAHTKDSMVAASTWFRDMVRLSKRKKILLFNQQSRDANALVNNLYSSVSPEITFDDVIFTTNVTWKSGSYSADLVSMNTSQEDVEKLKVQESLVKNWNKIDDNRAKTHVTASIEEANELIETLYDEPADIFVTGSLHLVGGLLVVFDRIDVK</sequence>
<reference evidence="4" key="1">
    <citation type="journal article" date="2008" name="FEMS Yeast Res.">
        <title>Comparative genome analysis of a Saccharomyces cerevisiae wine strain.</title>
        <authorList>
            <person name="Borneman A.R."/>
            <person name="Forgan A.H."/>
            <person name="Pretorius I.S."/>
            <person name="Chambers P.J."/>
        </authorList>
    </citation>
    <scope>NUCLEOTIDE SEQUENCE [LARGE SCALE GENOMIC DNA]</scope>
    <source>
        <strain>AWRI1631</strain>
    </source>
</reference>
<gene>
    <name evidence="2" type="primary">MET7</name>
    <name type="ORF">AWRI1631_153910</name>
</gene>
<feature type="chain" id="PRO_0000414488" description="Folylpolyglutamate synthase">
    <location>
        <begin position="1"/>
        <end position="548"/>
    </location>
</feature>
<feature type="binding site" evidence="1">
    <location>
        <begin position="130"/>
        <end position="133"/>
    </location>
    <ligand>
        <name>ATP</name>
        <dbReference type="ChEBI" id="CHEBI:30616"/>
    </ligand>
</feature>
<feature type="binding site" evidence="1">
    <location>
        <position position="157"/>
    </location>
    <ligand>
        <name>Mg(2+)</name>
        <dbReference type="ChEBI" id="CHEBI:18420"/>
        <label>1</label>
    </ligand>
</feature>
<feature type="binding site" evidence="1">
    <location>
        <position position="234"/>
    </location>
    <ligand>
        <name>Mg(2+)</name>
        <dbReference type="ChEBI" id="CHEBI:18420"/>
        <label>1</label>
    </ligand>
</feature>
<feature type="binding site" evidence="1">
    <location>
        <position position="262"/>
    </location>
    <ligand>
        <name>Mg(2+)</name>
        <dbReference type="ChEBI" id="CHEBI:18420"/>
        <label>2</label>
    </ligand>
</feature>
<feature type="binding site" evidence="1">
    <location>
        <position position="382"/>
    </location>
    <ligand>
        <name>ATP</name>
        <dbReference type="ChEBI" id="CHEBI:30616"/>
    </ligand>
</feature>
<feature type="binding site" evidence="1">
    <location>
        <position position="396"/>
    </location>
    <ligand>
        <name>ATP</name>
        <dbReference type="ChEBI" id="CHEBI:30616"/>
    </ligand>
</feature>
<accession>B5VSC3</accession>
<evidence type="ECO:0000250" key="1">
    <source>
        <dbReference type="UniProtKB" id="P08192"/>
    </source>
</evidence>
<evidence type="ECO:0000250" key="2">
    <source>
        <dbReference type="UniProtKB" id="Q08645"/>
    </source>
</evidence>
<evidence type="ECO:0000305" key="3"/>
<evidence type="ECO:0000312" key="4">
    <source>
        <dbReference type="EMBL" id="EDZ69170.1"/>
    </source>
</evidence>
<organism>
    <name type="scientific">Saccharomyces cerevisiae (strain AWRI1631)</name>
    <name type="common">Baker's yeast</name>
    <dbReference type="NCBI Taxonomy" id="545124"/>
    <lineage>
        <taxon>Eukaryota</taxon>
        <taxon>Fungi</taxon>
        <taxon>Dikarya</taxon>
        <taxon>Ascomycota</taxon>
        <taxon>Saccharomycotina</taxon>
        <taxon>Saccharomycetes</taxon>
        <taxon>Saccharomycetales</taxon>
        <taxon>Saccharomycetaceae</taxon>
        <taxon>Saccharomyces</taxon>
    </lineage>
</organism>
<name>FOLE_YEAS6</name>
<comment type="function">
    <text evidence="2">Catalyzes conversion of folates to polyglutamate derivatives allowing concentration of folate compounds in the cell and the intracellular retention of these cofactors, which are important substrates for most of the folate-dependent enzymes that are involved in one-carbon transfer reactions involved in purine, pyrimidine and amino acid synthesis. Required for methionine synthesis and maintenance of intact mitochondrial DNA. Involved in telomere maintenance (By similarity).</text>
</comment>
<comment type="catalytic activity">
    <reaction evidence="2">
        <text>(6S)-5,6,7,8-tetrahydrofolyl-(gamma-L-Glu)(n) + L-glutamate + ATP = (6S)-5,6,7,8-tetrahydrofolyl-(gamma-L-Glu)(n+1) + ADP + phosphate + H(+)</text>
        <dbReference type="Rhea" id="RHEA:10580"/>
        <dbReference type="Rhea" id="RHEA-COMP:14738"/>
        <dbReference type="Rhea" id="RHEA-COMP:14740"/>
        <dbReference type="ChEBI" id="CHEBI:15378"/>
        <dbReference type="ChEBI" id="CHEBI:29985"/>
        <dbReference type="ChEBI" id="CHEBI:30616"/>
        <dbReference type="ChEBI" id="CHEBI:43474"/>
        <dbReference type="ChEBI" id="CHEBI:141005"/>
        <dbReference type="ChEBI" id="CHEBI:456216"/>
        <dbReference type="EC" id="6.3.2.17"/>
    </reaction>
</comment>
<comment type="cofactor">
    <cofactor evidence="2">
        <name>a monovalent cation</name>
        <dbReference type="ChEBI" id="CHEBI:60242"/>
    </cofactor>
    <text evidence="2">A monovalent cation.</text>
</comment>
<comment type="pathway">
    <text evidence="2">Cofactor biosynthesis; tetrahydrofolylpolyglutamate biosynthesis.</text>
</comment>
<comment type="subcellular location">
    <subcellularLocation>
        <location evidence="2">Mitochondrion inner membrane</location>
    </subcellularLocation>
    <subcellularLocation>
        <location evidence="2">Mitochondrion matrix</location>
    </subcellularLocation>
    <subcellularLocation>
        <location evidence="2">Cytoplasm</location>
    </subcellularLocation>
</comment>
<comment type="similarity">
    <text evidence="2">Belongs to the folylpolyglutamate synthase family.</text>
</comment>
<comment type="sequence caution" evidence="3">
    <conflict type="erroneous initiation">
        <sequence resource="EMBL-CDS" id="EDZ69170"/>
    </conflict>
    <text>Truncated N-terminus.</text>
</comment>
<comment type="sequence caution" evidence="3">
    <conflict type="frameshift">
        <sequence resource="EMBL-CDS" id="EDZ69170"/>
    </conflict>
</comment>